<proteinExistence type="inferred from homology"/>
<dbReference type="EMBL" id="AE010299">
    <property type="protein sequence ID" value="AAM07458.1"/>
    <property type="molecule type" value="Genomic_DNA"/>
</dbReference>
<dbReference type="RefSeq" id="WP_011024001.1">
    <property type="nucleotide sequence ID" value="NC_003552.1"/>
</dbReference>
<dbReference type="SMR" id="Q8TIN6"/>
<dbReference type="STRING" id="188937.MA_4110"/>
<dbReference type="EnsemblBacteria" id="AAM07458">
    <property type="protein sequence ID" value="AAM07458"/>
    <property type="gene ID" value="MA_4110"/>
</dbReference>
<dbReference type="GeneID" id="1476004"/>
<dbReference type="KEGG" id="mac:MA_4110"/>
<dbReference type="HOGENOM" id="CLU_091867_1_1_2"/>
<dbReference type="InParanoid" id="Q8TIN6"/>
<dbReference type="OrthoDB" id="10045at2157"/>
<dbReference type="PhylomeDB" id="Q8TIN6"/>
<dbReference type="Proteomes" id="UP000002487">
    <property type="component" value="Chromosome"/>
</dbReference>
<dbReference type="GO" id="GO:0005737">
    <property type="term" value="C:cytoplasm"/>
    <property type="evidence" value="ECO:0000318"/>
    <property type="project" value="GO_Central"/>
</dbReference>
<dbReference type="GO" id="GO:0016272">
    <property type="term" value="C:prefoldin complex"/>
    <property type="evidence" value="ECO:0000318"/>
    <property type="project" value="GO_Central"/>
</dbReference>
<dbReference type="GO" id="GO:0051082">
    <property type="term" value="F:unfolded protein binding"/>
    <property type="evidence" value="ECO:0007669"/>
    <property type="project" value="UniProtKB-UniRule"/>
</dbReference>
<dbReference type="GO" id="GO:0006457">
    <property type="term" value="P:protein folding"/>
    <property type="evidence" value="ECO:0007669"/>
    <property type="project" value="UniProtKB-UniRule"/>
</dbReference>
<dbReference type="CDD" id="cd23160">
    <property type="entry name" value="Prefoldin_alpha_GimC"/>
    <property type="match status" value="1"/>
</dbReference>
<dbReference type="FunFam" id="1.10.287.370:FF:000027">
    <property type="entry name" value="Prefoldin subunit alpha 1"/>
    <property type="match status" value="1"/>
</dbReference>
<dbReference type="Gene3D" id="1.10.287.370">
    <property type="match status" value="1"/>
</dbReference>
<dbReference type="HAMAP" id="MF_00308">
    <property type="entry name" value="PfdA"/>
    <property type="match status" value="1"/>
</dbReference>
<dbReference type="InterPro" id="IPR011599">
    <property type="entry name" value="PFD_alpha_archaea"/>
</dbReference>
<dbReference type="InterPro" id="IPR009053">
    <property type="entry name" value="Prefoldin"/>
</dbReference>
<dbReference type="InterPro" id="IPR004127">
    <property type="entry name" value="Prefoldin_subunit_alpha"/>
</dbReference>
<dbReference type="NCBIfam" id="TIGR00293">
    <property type="entry name" value="prefoldin subunit alpha"/>
    <property type="match status" value="1"/>
</dbReference>
<dbReference type="PANTHER" id="PTHR12674">
    <property type="entry name" value="PREFOLDIN SUBUNIT 5"/>
    <property type="match status" value="1"/>
</dbReference>
<dbReference type="PANTHER" id="PTHR12674:SF4">
    <property type="entry name" value="PREFOLDIN SUBUNIT ALPHA 2"/>
    <property type="match status" value="1"/>
</dbReference>
<dbReference type="Pfam" id="PF02996">
    <property type="entry name" value="Prefoldin"/>
    <property type="match status" value="1"/>
</dbReference>
<dbReference type="SUPFAM" id="SSF46579">
    <property type="entry name" value="Prefoldin"/>
    <property type="match status" value="1"/>
</dbReference>
<organism>
    <name type="scientific">Methanosarcina acetivorans (strain ATCC 35395 / DSM 2834 / JCM 12185 / C2A)</name>
    <dbReference type="NCBI Taxonomy" id="188937"/>
    <lineage>
        <taxon>Archaea</taxon>
        <taxon>Methanobacteriati</taxon>
        <taxon>Methanobacteriota</taxon>
        <taxon>Stenosarchaea group</taxon>
        <taxon>Methanomicrobia</taxon>
        <taxon>Methanosarcinales</taxon>
        <taxon>Methanosarcinaceae</taxon>
        <taxon>Methanosarcina</taxon>
    </lineage>
</organism>
<gene>
    <name evidence="1" type="primary">pfdA</name>
    <name type="ordered locus">MA_4110</name>
</gene>
<evidence type="ECO:0000255" key="1">
    <source>
        <dbReference type="HAMAP-Rule" id="MF_00308"/>
    </source>
</evidence>
<evidence type="ECO:0000305" key="2"/>
<protein>
    <recommendedName>
        <fullName evidence="1">Prefoldin subunit alpha</fullName>
    </recommendedName>
    <alternativeName>
        <fullName evidence="1">GimC subunit alpha</fullName>
    </alternativeName>
</protein>
<keyword id="KW-0143">Chaperone</keyword>
<keyword id="KW-0963">Cytoplasm</keyword>
<keyword id="KW-1185">Reference proteome</keyword>
<feature type="chain" id="PRO_0000153673" description="Prefoldin subunit alpha">
    <location>
        <begin position="1"/>
        <end position="142"/>
    </location>
</feature>
<accession>Q8TIN6</accession>
<sequence length="142" mass="15636">MAEVSEEIRNLAARHQELQRQAEALRQEMGMIQTSISSCDQTIVTINELKAASEAGKPAETMVPVGFGSYVYAEVKNPDRIIVNLGAEFSAEETAEEAIETLNRRKEQLTKILEQMNASLTRLTQGMQTLEAEAAKLQPGQA</sequence>
<name>PFDA_METAC</name>
<reference key="1">
    <citation type="journal article" date="2002" name="Genome Res.">
        <title>The genome of Methanosarcina acetivorans reveals extensive metabolic and physiological diversity.</title>
        <authorList>
            <person name="Galagan J.E."/>
            <person name="Nusbaum C."/>
            <person name="Roy A."/>
            <person name="Endrizzi M.G."/>
            <person name="Macdonald P."/>
            <person name="FitzHugh W."/>
            <person name="Calvo S."/>
            <person name="Engels R."/>
            <person name="Smirnov S."/>
            <person name="Atnoor D."/>
            <person name="Brown A."/>
            <person name="Allen N."/>
            <person name="Naylor J."/>
            <person name="Stange-Thomann N."/>
            <person name="DeArellano K."/>
            <person name="Johnson R."/>
            <person name="Linton L."/>
            <person name="McEwan P."/>
            <person name="McKernan K."/>
            <person name="Talamas J."/>
            <person name="Tirrell A."/>
            <person name="Ye W."/>
            <person name="Zimmer A."/>
            <person name="Barber R.D."/>
            <person name="Cann I."/>
            <person name="Graham D.E."/>
            <person name="Grahame D.A."/>
            <person name="Guss A.M."/>
            <person name="Hedderich R."/>
            <person name="Ingram-Smith C."/>
            <person name="Kuettner H.C."/>
            <person name="Krzycki J.A."/>
            <person name="Leigh J.A."/>
            <person name="Li W."/>
            <person name="Liu J."/>
            <person name="Mukhopadhyay B."/>
            <person name="Reeve J.N."/>
            <person name="Smith K."/>
            <person name="Springer T.A."/>
            <person name="Umayam L.A."/>
            <person name="White O."/>
            <person name="White R.H."/>
            <person name="de Macario E.C."/>
            <person name="Ferry J.G."/>
            <person name="Jarrell K.F."/>
            <person name="Jing H."/>
            <person name="Macario A.J.L."/>
            <person name="Paulsen I.T."/>
            <person name="Pritchett M."/>
            <person name="Sowers K.R."/>
            <person name="Swanson R.V."/>
            <person name="Zinder S.H."/>
            <person name="Lander E."/>
            <person name="Metcalf W.W."/>
            <person name="Birren B."/>
        </authorList>
    </citation>
    <scope>NUCLEOTIDE SEQUENCE [LARGE SCALE GENOMIC DNA]</scope>
    <source>
        <strain>ATCC 35395 / DSM 2834 / JCM 12185 / C2A</strain>
    </source>
</reference>
<comment type="function">
    <text evidence="1">Molecular chaperone capable of stabilizing a range of proteins. Seems to fulfill an ATP-independent, HSP70-like function in archaeal de novo protein folding.</text>
</comment>
<comment type="subunit">
    <text evidence="1">Heterohexamer of two alpha and four beta subunits.</text>
</comment>
<comment type="subcellular location">
    <subcellularLocation>
        <location evidence="1">Cytoplasm</location>
    </subcellularLocation>
</comment>
<comment type="similarity">
    <text evidence="2">Belongs to the prefoldin subunit alpha family.</text>
</comment>